<dbReference type="EC" id="1.1.99.1" evidence="1"/>
<dbReference type="EC" id="1.2.1.8" evidence="1"/>
<dbReference type="EMBL" id="U39940">
    <property type="protein sequence ID" value="AAC13369.1"/>
    <property type="molecule type" value="Genomic_DNA"/>
</dbReference>
<dbReference type="EMBL" id="AL591688">
    <property type="protein sequence ID" value="CAC45519.1"/>
    <property type="molecule type" value="Genomic_DNA"/>
</dbReference>
<dbReference type="RefSeq" id="NP_385053.1">
    <property type="nucleotide sequence ID" value="NC_003047.1"/>
</dbReference>
<dbReference type="RefSeq" id="WP_010968940.1">
    <property type="nucleotide sequence ID" value="NC_003047.1"/>
</dbReference>
<dbReference type="SMR" id="P54223"/>
<dbReference type="CAZy" id="AA3">
    <property type="family name" value="Auxiliary Activities 3"/>
</dbReference>
<dbReference type="EnsemblBacteria" id="CAC45519">
    <property type="protein sequence ID" value="CAC45519"/>
    <property type="gene ID" value="SMc00093"/>
</dbReference>
<dbReference type="GeneID" id="89575269"/>
<dbReference type="KEGG" id="sme:SMc00093"/>
<dbReference type="PATRIC" id="fig|266834.11.peg.2346"/>
<dbReference type="eggNOG" id="COG2303">
    <property type="taxonomic scope" value="Bacteria"/>
</dbReference>
<dbReference type="HOGENOM" id="CLU_002865_7_1_5"/>
<dbReference type="OrthoDB" id="9785276at2"/>
<dbReference type="BioCyc" id="MetaCyc:MONOMER-244"/>
<dbReference type="UniPathway" id="UPA00529">
    <property type="reaction ID" value="UER00385"/>
</dbReference>
<dbReference type="Proteomes" id="UP000001976">
    <property type="component" value="Chromosome"/>
</dbReference>
<dbReference type="GO" id="GO:0005886">
    <property type="term" value="C:plasma membrane"/>
    <property type="evidence" value="ECO:0007669"/>
    <property type="project" value="UniProtKB-SubCell"/>
</dbReference>
<dbReference type="GO" id="GO:0008802">
    <property type="term" value="F:betaine-aldehyde dehydrogenase (NAD+) activity"/>
    <property type="evidence" value="ECO:0007669"/>
    <property type="project" value="UniProtKB-EC"/>
</dbReference>
<dbReference type="GO" id="GO:0008812">
    <property type="term" value="F:choline dehydrogenase activity"/>
    <property type="evidence" value="ECO:0007669"/>
    <property type="project" value="UniProtKB-UniRule"/>
</dbReference>
<dbReference type="GO" id="GO:0050660">
    <property type="term" value="F:flavin adenine dinucleotide binding"/>
    <property type="evidence" value="ECO:0007669"/>
    <property type="project" value="InterPro"/>
</dbReference>
<dbReference type="GO" id="GO:0019285">
    <property type="term" value="P:glycine betaine biosynthetic process from choline"/>
    <property type="evidence" value="ECO:0007669"/>
    <property type="project" value="UniProtKB-UniRule"/>
</dbReference>
<dbReference type="Gene3D" id="3.50.50.60">
    <property type="entry name" value="FAD/NAD(P)-binding domain"/>
    <property type="match status" value="1"/>
</dbReference>
<dbReference type="Gene3D" id="3.30.560.10">
    <property type="entry name" value="Glucose Oxidase, domain 3"/>
    <property type="match status" value="1"/>
</dbReference>
<dbReference type="HAMAP" id="MF_00750">
    <property type="entry name" value="Choline_dehydrogen"/>
    <property type="match status" value="1"/>
</dbReference>
<dbReference type="InterPro" id="IPR011533">
    <property type="entry name" value="BetA"/>
</dbReference>
<dbReference type="InterPro" id="IPR036188">
    <property type="entry name" value="FAD/NAD-bd_sf"/>
</dbReference>
<dbReference type="InterPro" id="IPR012132">
    <property type="entry name" value="GMC_OxRdtase"/>
</dbReference>
<dbReference type="InterPro" id="IPR000172">
    <property type="entry name" value="GMC_OxRdtase_N"/>
</dbReference>
<dbReference type="InterPro" id="IPR007867">
    <property type="entry name" value="GMC_OxRtase_C"/>
</dbReference>
<dbReference type="NCBIfam" id="TIGR01810">
    <property type="entry name" value="betA"/>
    <property type="match status" value="1"/>
</dbReference>
<dbReference type="NCBIfam" id="NF002550">
    <property type="entry name" value="PRK02106.1"/>
    <property type="match status" value="1"/>
</dbReference>
<dbReference type="PANTHER" id="PTHR11552:SF147">
    <property type="entry name" value="CHOLINE DEHYDROGENASE, MITOCHONDRIAL"/>
    <property type="match status" value="1"/>
</dbReference>
<dbReference type="PANTHER" id="PTHR11552">
    <property type="entry name" value="GLUCOSE-METHANOL-CHOLINE GMC OXIDOREDUCTASE"/>
    <property type="match status" value="1"/>
</dbReference>
<dbReference type="Pfam" id="PF05199">
    <property type="entry name" value="GMC_oxred_C"/>
    <property type="match status" value="1"/>
</dbReference>
<dbReference type="Pfam" id="PF00732">
    <property type="entry name" value="GMC_oxred_N"/>
    <property type="match status" value="1"/>
</dbReference>
<dbReference type="PIRSF" id="PIRSF000137">
    <property type="entry name" value="Alcohol_oxidase"/>
    <property type="match status" value="1"/>
</dbReference>
<dbReference type="SUPFAM" id="SSF54373">
    <property type="entry name" value="FAD-linked reductases, C-terminal domain"/>
    <property type="match status" value="1"/>
</dbReference>
<dbReference type="SUPFAM" id="SSF51905">
    <property type="entry name" value="FAD/NAD(P)-binding domain"/>
    <property type="match status" value="1"/>
</dbReference>
<dbReference type="PROSITE" id="PS00623">
    <property type="entry name" value="GMC_OXRED_1"/>
    <property type="match status" value="1"/>
</dbReference>
<dbReference type="PROSITE" id="PS00624">
    <property type="entry name" value="GMC_OXRED_2"/>
    <property type="match status" value="1"/>
</dbReference>
<organism>
    <name type="scientific">Rhizobium meliloti (strain 1021)</name>
    <name type="common">Ensifer meliloti</name>
    <name type="synonym">Sinorhizobium meliloti</name>
    <dbReference type="NCBI Taxonomy" id="266834"/>
    <lineage>
        <taxon>Bacteria</taxon>
        <taxon>Pseudomonadati</taxon>
        <taxon>Pseudomonadota</taxon>
        <taxon>Alphaproteobacteria</taxon>
        <taxon>Hyphomicrobiales</taxon>
        <taxon>Rhizobiaceae</taxon>
        <taxon>Sinorhizobium/Ensifer group</taxon>
        <taxon>Sinorhizobium</taxon>
    </lineage>
</organism>
<name>BETA_RHIME</name>
<keyword id="KW-1003">Cell membrane</keyword>
<keyword id="KW-0274">FAD</keyword>
<keyword id="KW-0285">Flavoprotein</keyword>
<keyword id="KW-0472">Membrane</keyword>
<keyword id="KW-0520">NAD</keyword>
<keyword id="KW-0560">Oxidoreductase</keyword>
<keyword id="KW-1185">Reference proteome</keyword>
<comment type="function">
    <text evidence="1 2">Involved in the biosynthesis of the osmoprotectant glycine betaine. Catalyzes the oxidation of choline to betaine aldehyde and betaine aldehyde to glycine betaine at the same rate.</text>
</comment>
<comment type="catalytic activity">
    <reaction evidence="1">
        <text>choline + A = betaine aldehyde + AH2</text>
        <dbReference type="Rhea" id="RHEA:17433"/>
        <dbReference type="ChEBI" id="CHEBI:13193"/>
        <dbReference type="ChEBI" id="CHEBI:15354"/>
        <dbReference type="ChEBI" id="CHEBI:15710"/>
        <dbReference type="ChEBI" id="CHEBI:17499"/>
        <dbReference type="EC" id="1.1.99.1"/>
    </reaction>
</comment>
<comment type="catalytic activity">
    <reaction evidence="1">
        <text>betaine aldehyde + NAD(+) + H2O = glycine betaine + NADH + 2 H(+)</text>
        <dbReference type="Rhea" id="RHEA:15305"/>
        <dbReference type="ChEBI" id="CHEBI:15377"/>
        <dbReference type="ChEBI" id="CHEBI:15378"/>
        <dbReference type="ChEBI" id="CHEBI:15710"/>
        <dbReference type="ChEBI" id="CHEBI:17750"/>
        <dbReference type="ChEBI" id="CHEBI:57540"/>
        <dbReference type="ChEBI" id="CHEBI:57945"/>
        <dbReference type="EC" id="1.2.1.8"/>
    </reaction>
</comment>
<comment type="cofactor">
    <cofactor evidence="1">
        <name>FAD</name>
        <dbReference type="ChEBI" id="CHEBI:57692"/>
    </cofactor>
</comment>
<comment type="pathway">
    <text evidence="1">Amine and polyamine biosynthesis; betaine biosynthesis via choline pathway; betaine aldehyde from choline (cytochrome c reductase route): step 1/1.</text>
</comment>
<comment type="subcellular location">
    <subcellularLocation>
        <location evidence="2">Cell membrane</location>
        <topology evidence="2">Peripheral membrane protein</topology>
    </subcellularLocation>
</comment>
<comment type="similarity">
    <text evidence="1">Belongs to the GMC oxidoreductase family.</text>
</comment>
<feature type="chain" id="PRO_0000205594" description="Oxygen-dependent choline dehydrogenase">
    <location>
        <begin position="1"/>
        <end position="549"/>
    </location>
</feature>
<feature type="active site" description="Proton acceptor" evidence="1">
    <location>
        <position position="465"/>
    </location>
</feature>
<feature type="binding site" evidence="1">
    <location>
        <begin position="4"/>
        <end position="33"/>
    </location>
    <ligand>
        <name>FAD</name>
        <dbReference type="ChEBI" id="CHEBI:57692"/>
    </ligand>
</feature>
<feature type="sequence conflict" description="In Ref. 1; AAC13369." evidence="3" ref="1">
    <original>A</original>
    <variation>R</variation>
    <location>
        <position position="267"/>
    </location>
</feature>
<feature type="sequence conflict" description="In Ref. 1; AAC13369." evidence="3" ref="1">
    <original>RHCVRLTR</original>
    <variation>DLRAVTG</variation>
    <location>
        <begin position="417"/>
        <end position="424"/>
    </location>
</feature>
<feature type="sequence conflict" description="In Ref. 1; AAC13369." evidence="3" ref="1">
    <original>Q</original>
    <variation>E</variation>
    <location>
        <position position="429"/>
    </location>
</feature>
<protein>
    <recommendedName>
        <fullName evidence="1">Oxygen-dependent choline dehydrogenase</fullName>
        <shortName evidence="1">CDH</shortName>
        <shortName evidence="1">CHD</shortName>
        <ecNumber evidence="1">1.1.99.1</ecNumber>
    </recommendedName>
    <alternativeName>
        <fullName evidence="1">Betaine aldehyde dehydrogenase</fullName>
        <shortName evidence="1">BADH</shortName>
        <ecNumber evidence="1">1.2.1.8</ecNumber>
    </alternativeName>
</protein>
<accession>P54223</accession>
<reference key="1">
    <citation type="journal article" date="1997" name="Microbiology">
        <title>Molecular characterization of the bet genes encoding glycine betaine synthesis in Sinorhizobium meliloti 102F34.</title>
        <authorList>
            <person name="Pocard J.A."/>
            <person name="Vincent N."/>
            <person name="Boncompagni E."/>
            <person name="Tombras Smith L."/>
            <person name="Poggi M.-C."/>
            <person name="Le Rudulier D."/>
        </authorList>
    </citation>
    <scope>NUCLEOTIDE SEQUENCE [GENOMIC DNA]</scope>
    <scope>FUNCTION</scope>
    <scope>SUBCELLULAR LOCATION</scope>
    <source>
        <strain>102F34</strain>
    </source>
</reference>
<reference key="2">
    <citation type="journal article" date="2001" name="Proc. Natl. Acad. Sci. U.S.A.">
        <title>Analysis of the chromosome sequence of the legume symbiont Sinorhizobium meliloti strain 1021.</title>
        <authorList>
            <person name="Capela D."/>
            <person name="Barloy-Hubler F."/>
            <person name="Gouzy J."/>
            <person name="Bothe G."/>
            <person name="Ampe F."/>
            <person name="Batut J."/>
            <person name="Boistard P."/>
            <person name="Becker A."/>
            <person name="Boutry M."/>
            <person name="Cadieu E."/>
            <person name="Dreano S."/>
            <person name="Gloux S."/>
            <person name="Godrie T."/>
            <person name="Goffeau A."/>
            <person name="Kahn D."/>
            <person name="Kiss E."/>
            <person name="Lelaure V."/>
            <person name="Masuy D."/>
            <person name="Pohl T."/>
            <person name="Portetelle D."/>
            <person name="Puehler A."/>
            <person name="Purnelle B."/>
            <person name="Ramsperger U."/>
            <person name="Renard C."/>
            <person name="Thebault P."/>
            <person name="Vandenbol M."/>
            <person name="Weidner S."/>
            <person name="Galibert F."/>
        </authorList>
    </citation>
    <scope>NUCLEOTIDE SEQUENCE [LARGE SCALE GENOMIC DNA]</scope>
    <source>
        <strain>1021</strain>
    </source>
</reference>
<reference key="3">
    <citation type="journal article" date="2001" name="Science">
        <title>The composite genome of the legume symbiont Sinorhizobium meliloti.</title>
        <authorList>
            <person name="Galibert F."/>
            <person name="Finan T.M."/>
            <person name="Long S.R."/>
            <person name="Puehler A."/>
            <person name="Abola P."/>
            <person name="Ampe F."/>
            <person name="Barloy-Hubler F."/>
            <person name="Barnett M.J."/>
            <person name="Becker A."/>
            <person name="Boistard P."/>
            <person name="Bothe G."/>
            <person name="Boutry M."/>
            <person name="Bowser L."/>
            <person name="Buhrmester J."/>
            <person name="Cadieu E."/>
            <person name="Capela D."/>
            <person name="Chain P."/>
            <person name="Cowie A."/>
            <person name="Davis R.W."/>
            <person name="Dreano S."/>
            <person name="Federspiel N.A."/>
            <person name="Fisher R.F."/>
            <person name="Gloux S."/>
            <person name="Godrie T."/>
            <person name="Goffeau A."/>
            <person name="Golding B."/>
            <person name="Gouzy J."/>
            <person name="Gurjal M."/>
            <person name="Hernandez-Lucas I."/>
            <person name="Hong A."/>
            <person name="Huizar L."/>
            <person name="Hyman R.W."/>
            <person name="Jones T."/>
            <person name="Kahn D."/>
            <person name="Kahn M.L."/>
            <person name="Kalman S."/>
            <person name="Keating D.H."/>
            <person name="Kiss E."/>
            <person name="Komp C."/>
            <person name="Lelaure V."/>
            <person name="Masuy D."/>
            <person name="Palm C."/>
            <person name="Peck M.C."/>
            <person name="Pohl T.M."/>
            <person name="Portetelle D."/>
            <person name="Purnelle B."/>
            <person name="Ramsperger U."/>
            <person name="Surzycki R."/>
            <person name="Thebault P."/>
            <person name="Vandenbol M."/>
            <person name="Vorhoelter F.J."/>
            <person name="Weidner S."/>
            <person name="Wells D.H."/>
            <person name="Wong K."/>
            <person name="Yeh K.-C."/>
            <person name="Batut J."/>
        </authorList>
    </citation>
    <scope>NUCLEOTIDE SEQUENCE [LARGE SCALE GENOMIC DNA]</scope>
    <source>
        <strain>1021</strain>
    </source>
</reference>
<proteinExistence type="inferred from homology"/>
<gene>
    <name evidence="1" type="primary">betA</name>
    <name type="ordered locus">R00947</name>
    <name type="ORF">SMc00093</name>
</gene>
<sequence>MQADFVIIGSGSAGSALAYRLSEDGRNSVIVLEFGGSDVGPFIQMPAALAWPMSMNRYNWGYLSEPEPNLNNRRITAPRGKVIGGSSSINGMVYVRGHSEDFNRWEELGAQGWAYADVLPYYKRMEHSHGGEEGWRGTDGPLHVQRGPVKNPLFHAFIEAGKEAGFEVTEDYNGSKQEGFGLMEQTTWRGRRWSAASAYLRPALKRPNVELIRCFARKIVIENGRATGVEIERGGRIEVVKANREVIVSASSFNSPKLLMLSGIGPAAHLKEMGIDVKVDRPGVGQNLQDHMEFYFQQVSTKPVSLYSWLPWFWQGVAGAQWLFFKRGLGISNQFESCAFLRSAPGVKQPDIQYHFLPVAISYDGKAAAKSHGFQVHVGYNLSKSRGNVSLRSSDPKADPVIRFNYMSHPEDWEKFRHCVRLTREIFGQKAFDLYRGPEIQPGEKVQTDEEIDGFLREHLESAYHPCGTCKMGAKDDPMAVVDPETRVIGVDGLRVADSSIFPHITYGNLNAPSIMTGEKSADHILGRQPLARSNQEPWINPRWAVSDR</sequence>
<evidence type="ECO:0000255" key="1">
    <source>
        <dbReference type="HAMAP-Rule" id="MF_00750"/>
    </source>
</evidence>
<evidence type="ECO:0000269" key="2">
    <source>
    </source>
</evidence>
<evidence type="ECO:0000305" key="3"/>